<dbReference type="EC" id="6.3.4.19" evidence="1"/>
<dbReference type="EMBL" id="AE005176">
    <property type="protein sequence ID" value="AAK04117.1"/>
    <property type="molecule type" value="Genomic_DNA"/>
</dbReference>
<dbReference type="PIR" id="C86627">
    <property type="entry name" value="C86627"/>
</dbReference>
<dbReference type="RefSeq" id="NP_266175.1">
    <property type="nucleotide sequence ID" value="NC_002662.1"/>
</dbReference>
<dbReference type="RefSeq" id="WP_010905037.1">
    <property type="nucleotide sequence ID" value="NC_002662.1"/>
</dbReference>
<dbReference type="SMR" id="Q9CJH4"/>
<dbReference type="PaxDb" id="272623-L1002"/>
<dbReference type="EnsemblBacteria" id="AAK04117">
    <property type="protein sequence ID" value="AAK04117"/>
    <property type="gene ID" value="L1002"/>
</dbReference>
<dbReference type="KEGG" id="lla:L1002"/>
<dbReference type="PATRIC" id="fig|272623.7.peg.21"/>
<dbReference type="eggNOG" id="COG0037">
    <property type="taxonomic scope" value="Bacteria"/>
</dbReference>
<dbReference type="HOGENOM" id="CLU_018869_0_2_9"/>
<dbReference type="OrthoDB" id="9807403at2"/>
<dbReference type="Proteomes" id="UP000002196">
    <property type="component" value="Chromosome"/>
</dbReference>
<dbReference type="GO" id="GO:0005737">
    <property type="term" value="C:cytoplasm"/>
    <property type="evidence" value="ECO:0007669"/>
    <property type="project" value="UniProtKB-SubCell"/>
</dbReference>
<dbReference type="GO" id="GO:0005524">
    <property type="term" value="F:ATP binding"/>
    <property type="evidence" value="ECO:0007669"/>
    <property type="project" value="UniProtKB-UniRule"/>
</dbReference>
<dbReference type="GO" id="GO:0032267">
    <property type="term" value="F:tRNA(Ile)-lysidine synthase activity"/>
    <property type="evidence" value="ECO:0007669"/>
    <property type="project" value="UniProtKB-EC"/>
</dbReference>
<dbReference type="GO" id="GO:0006400">
    <property type="term" value="P:tRNA modification"/>
    <property type="evidence" value="ECO:0007669"/>
    <property type="project" value="UniProtKB-UniRule"/>
</dbReference>
<dbReference type="CDD" id="cd01992">
    <property type="entry name" value="TilS_N"/>
    <property type="match status" value="1"/>
</dbReference>
<dbReference type="Gene3D" id="3.40.50.620">
    <property type="entry name" value="HUPs"/>
    <property type="match status" value="1"/>
</dbReference>
<dbReference type="HAMAP" id="MF_01161">
    <property type="entry name" value="tRNA_Ile_lys_synt"/>
    <property type="match status" value="1"/>
</dbReference>
<dbReference type="InterPro" id="IPR012796">
    <property type="entry name" value="Lysidine-tRNA-synth_C"/>
</dbReference>
<dbReference type="InterPro" id="IPR014729">
    <property type="entry name" value="Rossmann-like_a/b/a_fold"/>
</dbReference>
<dbReference type="InterPro" id="IPR011063">
    <property type="entry name" value="TilS/TtcA_N"/>
</dbReference>
<dbReference type="InterPro" id="IPR012094">
    <property type="entry name" value="tRNA_Ile_lys_synt"/>
</dbReference>
<dbReference type="InterPro" id="IPR012795">
    <property type="entry name" value="tRNA_Ile_lys_synt_N"/>
</dbReference>
<dbReference type="NCBIfam" id="TIGR02433">
    <property type="entry name" value="lysidine_TilS_C"/>
    <property type="match status" value="1"/>
</dbReference>
<dbReference type="NCBIfam" id="TIGR02432">
    <property type="entry name" value="lysidine_TilS_N"/>
    <property type="match status" value="1"/>
</dbReference>
<dbReference type="PANTHER" id="PTHR43033">
    <property type="entry name" value="TRNA(ILE)-LYSIDINE SYNTHASE-RELATED"/>
    <property type="match status" value="1"/>
</dbReference>
<dbReference type="PANTHER" id="PTHR43033:SF1">
    <property type="entry name" value="TRNA(ILE)-LYSIDINE SYNTHASE-RELATED"/>
    <property type="match status" value="1"/>
</dbReference>
<dbReference type="Pfam" id="PF01171">
    <property type="entry name" value="ATP_bind_3"/>
    <property type="match status" value="1"/>
</dbReference>
<dbReference type="Pfam" id="PF11734">
    <property type="entry name" value="TilS_C"/>
    <property type="match status" value="1"/>
</dbReference>
<dbReference type="SMART" id="SM00977">
    <property type="entry name" value="TilS_C"/>
    <property type="match status" value="1"/>
</dbReference>
<dbReference type="SUPFAM" id="SSF52402">
    <property type="entry name" value="Adenine nucleotide alpha hydrolases-like"/>
    <property type="match status" value="1"/>
</dbReference>
<dbReference type="SUPFAM" id="SSF56037">
    <property type="entry name" value="PheT/TilS domain"/>
    <property type="match status" value="1"/>
</dbReference>
<keyword id="KW-0067">ATP-binding</keyword>
<keyword id="KW-0963">Cytoplasm</keyword>
<keyword id="KW-0436">Ligase</keyword>
<keyword id="KW-0547">Nucleotide-binding</keyword>
<keyword id="KW-1185">Reference proteome</keyword>
<keyword id="KW-0819">tRNA processing</keyword>
<name>TILS_LACLA</name>
<feature type="chain" id="PRO_0000181708" description="tRNA(Ile)-lysidine synthase">
    <location>
        <begin position="1"/>
        <end position="423"/>
    </location>
</feature>
<feature type="binding site" evidence="1">
    <location>
        <begin position="29"/>
        <end position="34"/>
    </location>
    <ligand>
        <name>ATP</name>
        <dbReference type="ChEBI" id="CHEBI:30616"/>
    </ligand>
</feature>
<evidence type="ECO:0000255" key="1">
    <source>
        <dbReference type="HAMAP-Rule" id="MF_01161"/>
    </source>
</evidence>
<sequence>MTPAQRKFLKIVKDEHYFDKDSKILLALSGGKDSMTLFNWLYDLKEVLGIELGLAHINHGLREESKFEEIALREMATKLKVPIYVDKFTGEFTEKNARDFRYQFFEKLMIGENYNILLTAHHQGDLVETVLMRQITGRPLRSLQGIADRQPFAGGQLIRPLLKFTKEELDAQTYYEDSTNQGLDYFRNRIRNQLIPELKKENPQFSQSISDLSSEIKKALAVINQKISELEIVDEKISSKKFISQTKELQHFILQAFFAQYPEIEVSKKKFAELLHIINRPQQYFAKLNKEFYFVKTKDFFYLEKIQLERENSVEIVSENPQDESFMEVYLPLEGEIEIRKRQPGDQILINGHHKKLRKFFIDNKVPLKARENPLIFVDKKLYAIVGLACSDLSKMLKNDKIRRILWVKPSIGEEINDARKKS</sequence>
<comment type="function">
    <text evidence="1">Ligates lysine onto the cytidine present at position 34 of the AUA codon-specific tRNA(Ile) that contains the anticodon CAU, in an ATP-dependent manner. Cytidine is converted to lysidine, thus changing the amino acid specificity of the tRNA from methionine to isoleucine.</text>
</comment>
<comment type="catalytic activity">
    <reaction evidence="1">
        <text>cytidine(34) in tRNA(Ile2) + L-lysine + ATP = lysidine(34) in tRNA(Ile2) + AMP + diphosphate + H(+)</text>
        <dbReference type="Rhea" id="RHEA:43744"/>
        <dbReference type="Rhea" id="RHEA-COMP:10625"/>
        <dbReference type="Rhea" id="RHEA-COMP:10670"/>
        <dbReference type="ChEBI" id="CHEBI:15378"/>
        <dbReference type="ChEBI" id="CHEBI:30616"/>
        <dbReference type="ChEBI" id="CHEBI:32551"/>
        <dbReference type="ChEBI" id="CHEBI:33019"/>
        <dbReference type="ChEBI" id="CHEBI:82748"/>
        <dbReference type="ChEBI" id="CHEBI:83665"/>
        <dbReference type="ChEBI" id="CHEBI:456215"/>
        <dbReference type="EC" id="6.3.4.19"/>
    </reaction>
</comment>
<comment type="subcellular location">
    <subcellularLocation>
        <location evidence="1">Cytoplasm</location>
    </subcellularLocation>
</comment>
<comment type="domain">
    <text>The N-terminal region contains the highly conserved SGGXDS motif, predicted to be a P-loop motif involved in ATP binding.</text>
</comment>
<comment type="similarity">
    <text evidence="1">Belongs to the tRNA(Ile)-lysidine synthase family.</text>
</comment>
<gene>
    <name evidence="1" type="primary">tilS</name>
    <name type="ordered locus">LL0019</name>
    <name type="ORF">L1002</name>
</gene>
<organism>
    <name type="scientific">Lactococcus lactis subsp. lactis (strain IL1403)</name>
    <name type="common">Streptococcus lactis</name>
    <dbReference type="NCBI Taxonomy" id="272623"/>
    <lineage>
        <taxon>Bacteria</taxon>
        <taxon>Bacillati</taxon>
        <taxon>Bacillota</taxon>
        <taxon>Bacilli</taxon>
        <taxon>Lactobacillales</taxon>
        <taxon>Streptococcaceae</taxon>
        <taxon>Lactococcus</taxon>
    </lineage>
</organism>
<proteinExistence type="inferred from homology"/>
<protein>
    <recommendedName>
        <fullName evidence="1">tRNA(Ile)-lysidine synthase</fullName>
        <ecNumber evidence="1">6.3.4.19</ecNumber>
    </recommendedName>
    <alternativeName>
        <fullName evidence="1">tRNA(Ile)-2-lysyl-cytidine synthase</fullName>
    </alternativeName>
    <alternativeName>
        <fullName evidence="1">tRNA(Ile)-lysidine synthetase</fullName>
    </alternativeName>
</protein>
<reference key="1">
    <citation type="journal article" date="2001" name="Genome Res.">
        <title>The complete genome sequence of the lactic acid bacterium Lactococcus lactis ssp. lactis IL1403.</title>
        <authorList>
            <person name="Bolotin A."/>
            <person name="Wincker P."/>
            <person name="Mauger S."/>
            <person name="Jaillon O."/>
            <person name="Malarme K."/>
            <person name="Weissenbach J."/>
            <person name="Ehrlich S.D."/>
            <person name="Sorokin A."/>
        </authorList>
    </citation>
    <scope>NUCLEOTIDE SEQUENCE [LARGE SCALE GENOMIC DNA]</scope>
    <source>
        <strain>IL1403</strain>
    </source>
</reference>
<accession>Q9CJH4</accession>